<accession>Q9MTQ6</accession>
<organism>
    <name type="scientific">Hordeum vulgare</name>
    <name type="common">Barley</name>
    <dbReference type="NCBI Taxonomy" id="4513"/>
    <lineage>
        <taxon>Eukaryota</taxon>
        <taxon>Viridiplantae</taxon>
        <taxon>Streptophyta</taxon>
        <taxon>Embryophyta</taxon>
        <taxon>Tracheophyta</taxon>
        <taxon>Spermatophyta</taxon>
        <taxon>Magnoliopsida</taxon>
        <taxon>Liliopsida</taxon>
        <taxon>Poales</taxon>
        <taxon>Poaceae</taxon>
        <taxon>BOP clade</taxon>
        <taxon>Pooideae</taxon>
        <taxon>Triticodae</taxon>
        <taxon>Triticeae</taxon>
        <taxon>Hordeinae</taxon>
        <taxon>Hordeum</taxon>
    </lineage>
</organism>
<name>RCCR_HORVU</name>
<reference key="1">
    <citation type="journal article" date="2000" name="Plant J.">
        <title>Molecular cloning, functional expression and characterization of RCC reductase, involved in chlorophyll catabolism.</title>
        <authorList>
            <person name="Wuethrich K.L."/>
            <person name="Bovet L."/>
            <person name="Hunziker P.E."/>
            <person name="Donnison I.S."/>
            <person name="Hoertensteiner S."/>
        </authorList>
    </citation>
    <scope>NUCLEOTIDE SEQUENCE [MRNA]</scope>
    <source>
        <strain>cv. Express</strain>
        <tissue>Leaf</tissue>
    </source>
</reference>
<reference key="2">
    <citation type="journal article" date="1997" name="Plant Physiol.">
        <title>Partial purification and characterization of red chlorophyll catabolite reductase, a stroma protein involved in chlorophyll breakdown.</title>
        <authorList>
            <person name="Rodoni S."/>
            <person name="Vicentini F."/>
            <person name="Schellenberg M."/>
            <person name="Matile P."/>
            <person name="Hortensteiner S."/>
        </authorList>
    </citation>
    <scope>FUNCTION</scope>
    <scope>CATALYTIC ACTIVITY</scope>
    <scope>CHARACTERIZATION</scope>
    <scope>BIOPHYSICOCHEMICAL PROPERTIES</scope>
</reference>
<gene>
    <name type="primary">rccR</name>
</gene>
<proteinExistence type="evidence at protein level"/>
<dbReference type="EC" id="1.3.7.12" evidence="2"/>
<dbReference type="EMBL" id="AJ243066">
    <property type="protein sequence ID" value="CAB77705.1"/>
    <property type="molecule type" value="mRNA"/>
</dbReference>
<dbReference type="SMR" id="Q9MTQ6"/>
<dbReference type="KEGG" id="ag:CAB77705"/>
<dbReference type="BRENDA" id="1.3.7.12">
    <property type="organism ID" value="2687"/>
</dbReference>
<dbReference type="SABIO-RK" id="Q9MTQ6"/>
<dbReference type="UniPathway" id="UPA00674"/>
<dbReference type="GO" id="GO:0009570">
    <property type="term" value="C:chloroplast stroma"/>
    <property type="evidence" value="ECO:0007669"/>
    <property type="project" value="UniProtKB-SubCell"/>
</dbReference>
<dbReference type="GO" id="GO:0051743">
    <property type="term" value="F:red chlorophyll catabolite reductase activity"/>
    <property type="evidence" value="ECO:0007669"/>
    <property type="project" value="InterPro"/>
</dbReference>
<dbReference type="GO" id="GO:0015996">
    <property type="term" value="P:chlorophyll catabolic process"/>
    <property type="evidence" value="ECO:0007669"/>
    <property type="project" value="UniProtKB-UniPathway"/>
</dbReference>
<dbReference type="Gene3D" id="3.40.1500.20">
    <property type="match status" value="1"/>
</dbReference>
<dbReference type="InterPro" id="IPR009439">
    <property type="entry name" value="RCC_reductase"/>
</dbReference>
<dbReference type="PANTHER" id="PTHR34685">
    <property type="entry name" value="RED CHLOROPHYLL CATABOLITE REDUCTASE, CHLOROPLASTIC"/>
    <property type="match status" value="1"/>
</dbReference>
<dbReference type="PANTHER" id="PTHR34685:SF2">
    <property type="entry name" value="RED CHLOROPHYLL CATABOLITE REDUCTASE, CHLOROPLASTIC"/>
    <property type="match status" value="1"/>
</dbReference>
<dbReference type="Pfam" id="PF06405">
    <property type="entry name" value="RCC_reductase"/>
    <property type="match status" value="1"/>
</dbReference>
<keyword id="KW-0881">Chlorophyll catabolism</keyword>
<keyword id="KW-0150">Chloroplast</keyword>
<keyword id="KW-0521">NADP</keyword>
<keyword id="KW-0560">Oxidoreductase</keyword>
<keyword id="KW-0934">Plastid</keyword>
<protein>
    <recommendedName>
        <fullName>Red chlorophyll catabolite reductase</fullName>
        <shortName>RCC reductase</shortName>
        <ecNumber evidence="2">1.3.7.12</ecNumber>
    </recommendedName>
    <alternativeName>
        <fullName>HvRCCR</fullName>
    </alternativeName>
</protein>
<sequence length="205" mass="22868">IDFMLQSSLHCKVPNGAIDITSLFINLNASTDAPHFIMEFIQGSPTSMVVLLDLLPRKDLALHPEYIEKYYEDTEVDKQRKIIEQLPQARPYLSPSLFVRSAFSPTAVFFTIDCGKGGEGTLEEIVHGHLASVVKGILQIWLDTCASDASEMEEGEREIMVKRDRTVRSKSIEVDLTANLPRMFGPDVSGRIIAEIRKAFGVQEG</sequence>
<evidence type="ECO:0000250" key="1"/>
<evidence type="ECO:0000269" key="2">
    <source>
    </source>
</evidence>
<evidence type="ECO:0000305" key="3"/>
<comment type="function">
    <text evidence="2">Catalyzes the key reaction of chlorophyll catabolism, porphyrin macrocycle cleavage of pheophorbide a (pheide a) to a primary fluorescent catabolite (pFCC). Works in a two-step reaction with pheophorbide a oxygenase (PaO) by reducing the C20/C1 double bond of the intermediate, RCC.</text>
</comment>
<comment type="catalytic activity">
    <reaction evidence="2">
        <text>primary fluorescent chlorophyll catabolite + 2 oxidized [2Fe-2S]-[ferredoxin] = red chlorophyll catabolite + 2 reduced [2Fe-2S]-[ferredoxin] + 3 H(+)</text>
        <dbReference type="Rhea" id="RHEA:24752"/>
        <dbReference type="Rhea" id="RHEA-COMP:10000"/>
        <dbReference type="Rhea" id="RHEA-COMP:10001"/>
        <dbReference type="ChEBI" id="CHEBI:15378"/>
        <dbReference type="ChEBI" id="CHEBI:33737"/>
        <dbReference type="ChEBI" id="CHEBI:33738"/>
        <dbReference type="ChEBI" id="CHEBI:58716"/>
        <dbReference type="ChEBI" id="CHEBI:77670"/>
        <dbReference type="EC" id="1.3.7.12"/>
    </reaction>
</comment>
<comment type="biophysicochemical properties">
    <kinetics>
        <KM evidence="2">0.6 mM for red chlorophyll catabolite</KM>
    </kinetics>
</comment>
<comment type="pathway">
    <text>Porphyrin-containing compound metabolism; chlorophyll degradation.</text>
</comment>
<comment type="subunit">
    <text evidence="1">Homodimer.</text>
</comment>
<comment type="subcellular location">
    <subcellularLocation>
        <location>Plastid</location>
        <location>Chloroplast stroma</location>
    </subcellularLocation>
</comment>
<comment type="tissue specificity">
    <text>In etiolated and green primary leaves. Low amount in roots.</text>
</comment>
<comment type="developmental stage">
    <text>Decreases during leaf senescence, but still present after 8 days of dark-induced senescence.</text>
</comment>
<comment type="PTM">
    <text>The N-terminus is blocked.</text>
</comment>
<feature type="chain" id="PRO_0000097198" description="Red chlorophyll catabolite reductase">
    <location>
        <begin position="1" status="less than"/>
        <end position="205"/>
    </location>
</feature>
<feature type="binding site" evidence="3">
    <location>
        <position position="39"/>
    </location>
    <ligand>
        <name>substrate</name>
    </ligand>
</feature>
<feature type="binding site" evidence="3">
    <location>
        <position position="175"/>
    </location>
    <ligand>
        <name>substrate</name>
    </ligand>
</feature>
<feature type="site" description="Important for substrate stereospecificity" evidence="1">
    <location>
        <position position="103"/>
    </location>
</feature>
<feature type="non-terminal residue">
    <location>
        <position position="1"/>
    </location>
</feature>